<sequence length="958" mass="105810">MSKKRLYEIAKELGKESKEVVARAKELGLDVKSHSSSVEEAVAAKIAASFKPAAAPKVEAKPAAPKVSAEKKAEKSEPAKPAVAKEEAKPAAPKASAEKKAEKSEPVKPAVAKEEAKPAEPVTPKTEKVAAKPQSRNFKAEREARAKEQAERRKQNKGNNRDQQQNGNRQKNDGRNGGKQGQSNRDNRRFNDQAKKQQGQQKRRNERRQQEDKRSNQAAPRIDFKARAAALKAEQNAEYARSSEERFKQYQAAKEALAQANKRKEPEEIFEEAAKLAEQAQQVQAVVEVVPEKKEPAVDTRRKKQARPDKNRDDYDHEEDGPRKQQKNRSSQNQVRNQKNSNWNNNKKNKKGNNKNNRNQTPKPVTERKFHELPTEFEYTDGMTVAEIAKRIKREPAEIVKKLFMMGVMATQNQSLDGETIELLMVDYGIEAKQKVEVDNADIERFFVEDGYLNEDELVERPPVVTIMGHVDHGKTTLLDTLRNSRVATGEAGGITQHIGAYQIVENGKKITFLDTPGHAAFTSMRARGASVTDITILVVAADDGVMPQTIEAINHSKAANVPIIVAINKIDKPGANPERVIGELAEHGVMSTAWGGDSEFVEISAKFNQNIEELLETVLLVAEIQELKADPTVRAIGTVIEARLDKGKGAVATLLVQQGTLNVQDPIVVGNTFGRVRAMTNDLGRRVKVAGPSTPVSITGLNEAPMAGDHFAVYEDEKSARAAGEERAKRALMKQRQATQRVSLENLFDTLKAGELKSVNVIIKADVQGSVEALSASLQKIDVEGVKVTIVHSAVGAINESDVTLAEASNAFIVGFNVRPTPQARQQAEADDVEIRLHSIIYKVIEEMEEAMKGMLDPEFEEKVIGEAVIRETFKVSKVGTIGGFMVINGKVARDSKVRVIRDGVVIYDGELASLKHYKDDVKEVTNGREGGLMIDGYNDIKMDDVIEAYVMEEIKR</sequence>
<proteinExistence type="inferred from homology"/>
<organism>
    <name type="scientific">Streptococcus pneumoniae serotype 4 (strain ATCC BAA-334 / TIGR4)</name>
    <dbReference type="NCBI Taxonomy" id="170187"/>
    <lineage>
        <taxon>Bacteria</taxon>
        <taxon>Bacillati</taxon>
        <taxon>Bacillota</taxon>
        <taxon>Bacilli</taxon>
        <taxon>Lactobacillales</taxon>
        <taxon>Streptococcaceae</taxon>
        <taxon>Streptococcus</taxon>
    </lineage>
</organism>
<dbReference type="EMBL" id="AE005672">
    <property type="protein sequence ID" value="AAK74712.1"/>
    <property type="molecule type" value="Genomic_DNA"/>
</dbReference>
<dbReference type="PIR" id="G95064">
    <property type="entry name" value="G95064"/>
</dbReference>
<dbReference type="RefSeq" id="WP_000039196.1">
    <property type="nucleotide sequence ID" value="NZ_CP155539.1"/>
</dbReference>
<dbReference type="SMR" id="Q97S57"/>
<dbReference type="PaxDb" id="170187-SP_0556"/>
<dbReference type="EnsemblBacteria" id="AAK74712">
    <property type="protein sequence ID" value="AAK74712"/>
    <property type="gene ID" value="SP_0556"/>
</dbReference>
<dbReference type="KEGG" id="spn:SP_0556"/>
<dbReference type="eggNOG" id="COG0532">
    <property type="taxonomic scope" value="Bacteria"/>
</dbReference>
<dbReference type="eggNOG" id="COG3064">
    <property type="taxonomic scope" value="Bacteria"/>
</dbReference>
<dbReference type="PhylomeDB" id="Q97S57"/>
<dbReference type="BioCyc" id="SPNE170187:G1FZB-576-MONOMER"/>
<dbReference type="Proteomes" id="UP000000585">
    <property type="component" value="Chromosome"/>
</dbReference>
<dbReference type="GO" id="GO:0005829">
    <property type="term" value="C:cytosol"/>
    <property type="evidence" value="ECO:0007669"/>
    <property type="project" value="TreeGrafter"/>
</dbReference>
<dbReference type="GO" id="GO:0005525">
    <property type="term" value="F:GTP binding"/>
    <property type="evidence" value="ECO:0007669"/>
    <property type="project" value="UniProtKB-KW"/>
</dbReference>
<dbReference type="GO" id="GO:0003924">
    <property type="term" value="F:GTPase activity"/>
    <property type="evidence" value="ECO:0007669"/>
    <property type="project" value="UniProtKB-UniRule"/>
</dbReference>
<dbReference type="GO" id="GO:0003743">
    <property type="term" value="F:translation initiation factor activity"/>
    <property type="evidence" value="ECO:0007669"/>
    <property type="project" value="UniProtKB-UniRule"/>
</dbReference>
<dbReference type="CDD" id="cd01887">
    <property type="entry name" value="IF2_eIF5B"/>
    <property type="match status" value="1"/>
</dbReference>
<dbReference type="CDD" id="cd03702">
    <property type="entry name" value="IF2_mtIF2_II"/>
    <property type="match status" value="1"/>
</dbReference>
<dbReference type="CDD" id="cd03692">
    <property type="entry name" value="mtIF2_IVc"/>
    <property type="match status" value="1"/>
</dbReference>
<dbReference type="FunFam" id="1.10.10.2480:FF:000003">
    <property type="entry name" value="Translation initiation factor IF-2"/>
    <property type="match status" value="1"/>
</dbReference>
<dbReference type="FunFam" id="2.40.30.10:FF:000007">
    <property type="entry name" value="Translation initiation factor IF-2"/>
    <property type="match status" value="1"/>
</dbReference>
<dbReference type="FunFam" id="2.40.30.10:FF:000008">
    <property type="entry name" value="Translation initiation factor IF-2"/>
    <property type="match status" value="1"/>
</dbReference>
<dbReference type="FunFam" id="3.40.50.10050:FF:000001">
    <property type="entry name" value="Translation initiation factor IF-2"/>
    <property type="match status" value="1"/>
</dbReference>
<dbReference type="FunFam" id="3.40.50.300:FF:000019">
    <property type="entry name" value="Translation initiation factor IF-2"/>
    <property type="match status" value="1"/>
</dbReference>
<dbReference type="Gene3D" id="1.10.10.2480">
    <property type="match status" value="1"/>
</dbReference>
<dbReference type="Gene3D" id="3.40.50.300">
    <property type="entry name" value="P-loop containing nucleotide triphosphate hydrolases"/>
    <property type="match status" value="1"/>
</dbReference>
<dbReference type="Gene3D" id="2.40.30.10">
    <property type="entry name" value="Translation factors"/>
    <property type="match status" value="2"/>
</dbReference>
<dbReference type="Gene3D" id="3.40.50.10050">
    <property type="entry name" value="Translation initiation factor IF- 2, domain 3"/>
    <property type="match status" value="1"/>
</dbReference>
<dbReference type="HAMAP" id="MF_00100_B">
    <property type="entry name" value="IF_2_B"/>
    <property type="match status" value="1"/>
</dbReference>
<dbReference type="InterPro" id="IPR053905">
    <property type="entry name" value="EF-G-like_DII"/>
</dbReference>
<dbReference type="InterPro" id="IPR044145">
    <property type="entry name" value="IF2_II"/>
</dbReference>
<dbReference type="InterPro" id="IPR006847">
    <property type="entry name" value="IF2_N"/>
</dbReference>
<dbReference type="InterPro" id="IPR027417">
    <property type="entry name" value="P-loop_NTPase"/>
</dbReference>
<dbReference type="InterPro" id="IPR005225">
    <property type="entry name" value="Small_GTP-bd"/>
</dbReference>
<dbReference type="InterPro" id="IPR000795">
    <property type="entry name" value="T_Tr_GTP-bd_dom"/>
</dbReference>
<dbReference type="InterPro" id="IPR000178">
    <property type="entry name" value="TF_IF2_bacterial-like"/>
</dbReference>
<dbReference type="InterPro" id="IPR015760">
    <property type="entry name" value="TIF_IF2"/>
</dbReference>
<dbReference type="InterPro" id="IPR023115">
    <property type="entry name" value="TIF_IF2_dom3"/>
</dbReference>
<dbReference type="InterPro" id="IPR036925">
    <property type="entry name" value="TIF_IF2_dom3_sf"/>
</dbReference>
<dbReference type="InterPro" id="IPR009000">
    <property type="entry name" value="Transl_B-barrel_sf"/>
</dbReference>
<dbReference type="NCBIfam" id="TIGR00487">
    <property type="entry name" value="IF-2"/>
    <property type="match status" value="1"/>
</dbReference>
<dbReference type="NCBIfam" id="TIGR00231">
    <property type="entry name" value="small_GTP"/>
    <property type="match status" value="1"/>
</dbReference>
<dbReference type="PANTHER" id="PTHR43381:SF5">
    <property type="entry name" value="TR-TYPE G DOMAIN-CONTAINING PROTEIN"/>
    <property type="match status" value="1"/>
</dbReference>
<dbReference type="PANTHER" id="PTHR43381">
    <property type="entry name" value="TRANSLATION INITIATION FACTOR IF-2-RELATED"/>
    <property type="match status" value="1"/>
</dbReference>
<dbReference type="Pfam" id="PF22042">
    <property type="entry name" value="EF-G_D2"/>
    <property type="match status" value="1"/>
</dbReference>
<dbReference type="Pfam" id="PF00009">
    <property type="entry name" value="GTP_EFTU"/>
    <property type="match status" value="1"/>
</dbReference>
<dbReference type="Pfam" id="PF11987">
    <property type="entry name" value="IF-2"/>
    <property type="match status" value="1"/>
</dbReference>
<dbReference type="Pfam" id="PF04760">
    <property type="entry name" value="IF2_N"/>
    <property type="match status" value="2"/>
</dbReference>
<dbReference type="SUPFAM" id="SSF52156">
    <property type="entry name" value="Initiation factor IF2/eIF5b, domain 3"/>
    <property type="match status" value="1"/>
</dbReference>
<dbReference type="SUPFAM" id="SSF52540">
    <property type="entry name" value="P-loop containing nucleoside triphosphate hydrolases"/>
    <property type="match status" value="1"/>
</dbReference>
<dbReference type="SUPFAM" id="SSF50447">
    <property type="entry name" value="Translation proteins"/>
    <property type="match status" value="2"/>
</dbReference>
<dbReference type="PROSITE" id="PS51722">
    <property type="entry name" value="G_TR_2"/>
    <property type="match status" value="1"/>
</dbReference>
<dbReference type="PROSITE" id="PS01176">
    <property type="entry name" value="IF2"/>
    <property type="match status" value="1"/>
</dbReference>
<evidence type="ECO:0000250" key="1"/>
<evidence type="ECO:0000255" key="2">
    <source>
        <dbReference type="HAMAP-Rule" id="MF_00100"/>
    </source>
</evidence>
<evidence type="ECO:0000256" key="3">
    <source>
        <dbReference type="SAM" id="MobiDB-lite"/>
    </source>
</evidence>
<accession>Q97S57</accession>
<reference key="1">
    <citation type="journal article" date="2001" name="Science">
        <title>Complete genome sequence of a virulent isolate of Streptococcus pneumoniae.</title>
        <authorList>
            <person name="Tettelin H."/>
            <person name="Nelson K.E."/>
            <person name="Paulsen I.T."/>
            <person name="Eisen J.A."/>
            <person name="Read T.D."/>
            <person name="Peterson S.N."/>
            <person name="Heidelberg J.F."/>
            <person name="DeBoy R.T."/>
            <person name="Haft D.H."/>
            <person name="Dodson R.J."/>
            <person name="Durkin A.S."/>
            <person name="Gwinn M.L."/>
            <person name="Kolonay J.F."/>
            <person name="Nelson W.C."/>
            <person name="Peterson J.D."/>
            <person name="Umayam L.A."/>
            <person name="White O."/>
            <person name="Salzberg S.L."/>
            <person name="Lewis M.R."/>
            <person name="Radune D."/>
            <person name="Holtzapple E.K."/>
            <person name="Khouri H.M."/>
            <person name="Wolf A.M."/>
            <person name="Utterback T.R."/>
            <person name="Hansen C.L."/>
            <person name="McDonald L.A."/>
            <person name="Feldblyum T.V."/>
            <person name="Angiuoli S.V."/>
            <person name="Dickinson T."/>
            <person name="Hickey E.K."/>
            <person name="Holt I.E."/>
            <person name="Loftus B.J."/>
            <person name="Yang F."/>
            <person name="Smith H.O."/>
            <person name="Venter J.C."/>
            <person name="Dougherty B.A."/>
            <person name="Morrison D.A."/>
            <person name="Hollingshead S.K."/>
            <person name="Fraser C.M."/>
        </authorList>
    </citation>
    <scope>NUCLEOTIDE SEQUENCE [LARGE SCALE GENOMIC DNA]</scope>
    <source>
        <strain>ATCC BAA-334 / TIGR4</strain>
    </source>
</reference>
<name>IF2_STRPN</name>
<comment type="function">
    <text evidence="2">One of the essential components for the initiation of protein synthesis. Protects formylmethionyl-tRNA from spontaneous hydrolysis and promotes its binding to the 30S ribosomal subunits. Also involved in the hydrolysis of GTP during the formation of the 70S ribosomal complex.</text>
</comment>
<comment type="subcellular location">
    <subcellularLocation>
        <location evidence="2">Cytoplasm</location>
    </subcellularLocation>
</comment>
<comment type="similarity">
    <text evidence="2">Belongs to the TRAFAC class translation factor GTPase superfamily. Classic translation factor GTPase family. IF-2 subfamily.</text>
</comment>
<keyword id="KW-0963">Cytoplasm</keyword>
<keyword id="KW-0342">GTP-binding</keyword>
<keyword id="KW-0396">Initiation factor</keyword>
<keyword id="KW-0547">Nucleotide-binding</keyword>
<keyword id="KW-0648">Protein biosynthesis</keyword>
<keyword id="KW-1185">Reference proteome</keyword>
<gene>
    <name evidence="2" type="primary">infB</name>
    <name type="ordered locus">SP_0556</name>
</gene>
<protein>
    <recommendedName>
        <fullName evidence="2">Translation initiation factor IF-2</fullName>
    </recommendedName>
</protein>
<feature type="chain" id="PRO_0000137263" description="Translation initiation factor IF-2">
    <location>
        <begin position="1"/>
        <end position="958"/>
    </location>
</feature>
<feature type="domain" description="tr-type G">
    <location>
        <begin position="460"/>
        <end position="627"/>
    </location>
</feature>
<feature type="region of interest" description="Disordered" evidence="3">
    <location>
        <begin position="50"/>
        <end position="224"/>
    </location>
</feature>
<feature type="region of interest" description="Disordered" evidence="3">
    <location>
        <begin position="288"/>
        <end position="374"/>
    </location>
</feature>
<feature type="region of interest" description="G1" evidence="1">
    <location>
        <begin position="469"/>
        <end position="476"/>
    </location>
</feature>
<feature type="region of interest" description="G2" evidence="1">
    <location>
        <begin position="494"/>
        <end position="498"/>
    </location>
</feature>
<feature type="region of interest" description="G3" evidence="1">
    <location>
        <begin position="515"/>
        <end position="518"/>
    </location>
</feature>
<feature type="region of interest" description="G4" evidence="1">
    <location>
        <begin position="569"/>
        <end position="572"/>
    </location>
</feature>
<feature type="region of interest" description="G5" evidence="1">
    <location>
        <begin position="605"/>
        <end position="607"/>
    </location>
</feature>
<feature type="compositionally biased region" description="Low complexity" evidence="3">
    <location>
        <begin position="50"/>
        <end position="67"/>
    </location>
</feature>
<feature type="compositionally biased region" description="Basic and acidic residues" evidence="3">
    <location>
        <begin position="68"/>
        <end position="89"/>
    </location>
</feature>
<feature type="compositionally biased region" description="Basic and acidic residues" evidence="3">
    <location>
        <begin position="96"/>
        <end position="118"/>
    </location>
</feature>
<feature type="compositionally biased region" description="Basic and acidic residues" evidence="3">
    <location>
        <begin position="138"/>
        <end position="153"/>
    </location>
</feature>
<feature type="compositionally biased region" description="Low complexity" evidence="3">
    <location>
        <begin position="157"/>
        <end position="169"/>
    </location>
</feature>
<feature type="compositionally biased region" description="Basic and acidic residues" evidence="3">
    <location>
        <begin position="185"/>
        <end position="195"/>
    </location>
</feature>
<feature type="compositionally biased region" description="Basic and acidic residues" evidence="3">
    <location>
        <begin position="290"/>
        <end position="323"/>
    </location>
</feature>
<feature type="compositionally biased region" description="Low complexity" evidence="3">
    <location>
        <begin position="337"/>
        <end position="346"/>
    </location>
</feature>
<feature type="compositionally biased region" description="Basic and acidic residues" evidence="3">
    <location>
        <begin position="365"/>
        <end position="374"/>
    </location>
</feature>
<feature type="binding site" evidence="2">
    <location>
        <begin position="469"/>
        <end position="476"/>
    </location>
    <ligand>
        <name>GTP</name>
        <dbReference type="ChEBI" id="CHEBI:37565"/>
    </ligand>
</feature>
<feature type="binding site" evidence="2">
    <location>
        <begin position="515"/>
        <end position="519"/>
    </location>
    <ligand>
        <name>GTP</name>
        <dbReference type="ChEBI" id="CHEBI:37565"/>
    </ligand>
</feature>
<feature type="binding site" evidence="2">
    <location>
        <begin position="569"/>
        <end position="572"/>
    </location>
    <ligand>
        <name>GTP</name>
        <dbReference type="ChEBI" id="CHEBI:37565"/>
    </ligand>
</feature>